<name>VL1_HPV49</name>
<proteinExistence type="inferred from homology"/>
<feature type="chain" id="PRO_0000133532" description="Major capsid protein L1">
    <location>
        <begin position="1"/>
        <end position="509"/>
    </location>
</feature>
<feature type="disulfide bond" description="Interchain (with C-439)" evidence="1">
    <location>
        <position position="177"/>
    </location>
</feature>
<feature type="disulfide bond" description="Interchain (with C-177)" evidence="1">
    <location>
        <position position="439"/>
    </location>
</feature>
<organism>
    <name type="scientific">Human papillomavirus type 49</name>
    <dbReference type="NCBI Taxonomy" id="10616"/>
    <lineage>
        <taxon>Viruses</taxon>
        <taxon>Monodnaviria</taxon>
        <taxon>Shotokuvirae</taxon>
        <taxon>Cossaviricota</taxon>
        <taxon>Papovaviricetes</taxon>
        <taxon>Zurhausenvirales</taxon>
        <taxon>Papillomaviridae</taxon>
        <taxon>Firstpapillomavirinae</taxon>
        <taxon>Betapapillomavirus</taxon>
        <taxon>Betapapillomavirus 3</taxon>
    </lineage>
</organism>
<accession>P36742</accession>
<protein>
    <recommendedName>
        <fullName evidence="1">Major capsid protein L1</fullName>
    </recommendedName>
</protein>
<reference key="1">
    <citation type="journal article" date="1994" name="Curr. Top. Microbiol. Immunol.">
        <title>Primer-directed sequencing of human papillomavirus types.</title>
        <authorList>
            <person name="Delius H."/>
            <person name="Hofmann B."/>
        </authorList>
    </citation>
    <scope>NUCLEOTIDE SEQUENCE [GENOMIC DNA]</scope>
</reference>
<organismHost>
    <name type="scientific">Homo sapiens</name>
    <name type="common">Human</name>
    <dbReference type="NCBI Taxonomy" id="9606"/>
</organismHost>
<comment type="function">
    <text evidence="1">Forms an icosahedral capsid with a T=7 symmetry and a 50 nm diameter. The capsid is composed of 72 pentamers linked to each other by disulfide bonds and associated with L2 proteins. Binds to heparan sulfate proteoglycans on cell surface of basal layer keratinocytes to provide initial virion attachment. This binding mediates a conformational change in the virus capsid that facilitates efficient infection. The virion enters the host cell via endocytosis. During virus trafficking, L1 protein dissociates from the viral DNA and the genomic DNA is released to the host nucleus. The virion assembly takes place within the cell nucleus. Encapsulates the genomic DNA together with protein L2.</text>
</comment>
<comment type="subunit">
    <text evidence="1">Self-assembles into homopentamers. The capsid has an icosahedral symmetry and consists of 72 capsomers, with each capsomer being a pentamer of L1. Interacts with the minor capsid protein L2; this interaction is necessary for viral genome encapsidation. Interacts with protein E2; this interaction enhances E2-dependent replication and transcription activation.</text>
</comment>
<comment type="subcellular location">
    <subcellularLocation>
        <location evidence="1">Virion</location>
    </subcellularLocation>
    <subcellularLocation>
        <location evidence="1">Host nucleus</location>
    </subcellularLocation>
</comment>
<comment type="similarity">
    <text evidence="1">Belongs to the papillomaviridae L1 protein family.</text>
</comment>
<keyword id="KW-0167">Capsid protein</keyword>
<keyword id="KW-1015">Disulfide bond</keyword>
<keyword id="KW-1048">Host nucleus</keyword>
<keyword id="KW-0945">Host-virus interaction</keyword>
<keyword id="KW-0426">Late protein</keyword>
<keyword id="KW-1145">T=7 icosahedral capsid protein</keyword>
<keyword id="KW-1161">Viral attachment to host cell</keyword>
<keyword id="KW-1162">Viral penetration into host cytoplasm</keyword>
<keyword id="KW-0946">Virion</keyword>
<keyword id="KW-1164">Virus endocytosis by host</keyword>
<keyword id="KW-1160">Virus entry into host cell</keyword>
<dbReference type="EMBL" id="X74480">
    <property type="protein sequence ID" value="CAA52584.1"/>
    <property type="molecule type" value="Genomic_DNA"/>
</dbReference>
<dbReference type="PIR" id="S36572">
    <property type="entry name" value="S36572"/>
</dbReference>
<dbReference type="RefSeq" id="NP_041837.1">
    <property type="nucleotide sequence ID" value="NC_001591.1"/>
</dbReference>
<dbReference type="SMR" id="P36742"/>
<dbReference type="GeneID" id="1489446"/>
<dbReference type="KEGG" id="vg:1489446"/>
<dbReference type="OrthoDB" id="5037at10239"/>
<dbReference type="Proteomes" id="UP000009124">
    <property type="component" value="Genome"/>
</dbReference>
<dbReference type="GO" id="GO:0042025">
    <property type="term" value="C:host cell nucleus"/>
    <property type="evidence" value="ECO:0007669"/>
    <property type="project" value="UniProtKB-SubCell"/>
</dbReference>
<dbReference type="GO" id="GO:0039620">
    <property type="term" value="C:T=7 icosahedral viral capsid"/>
    <property type="evidence" value="ECO:0007669"/>
    <property type="project" value="UniProtKB-UniRule"/>
</dbReference>
<dbReference type="GO" id="GO:0005198">
    <property type="term" value="F:structural molecule activity"/>
    <property type="evidence" value="ECO:0007669"/>
    <property type="project" value="UniProtKB-UniRule"/>
</dbReference>
<dbReference type="GO" id="GO:0075509">
    <property type="term" value="P:endocytosis involved in viral entry into host cell"/>
    <property type="evidence" value="ECO:0007669"/>
    <property type="project" value="UniProtKB-KW"/>
</dbReference>
<dbReference type="GO" id="GO:0019062">
    <property type="term" value="P:virion attachment to host cell"/>
    <property type="evidence" value="ECO:0007669"/>
    <property type="project" value="UniProtKB-UniRule"/>
</dbReference>
<dbReference type="Gene3D" id="2.60.175.20">
    <property type="entry name" value="Major capsid L1 (late) superfamily, Papillomavirus"/>
    <property type="match status" value="2"/>
</dbReference>
<dbReference type="HAMAP" id="MF_04002">
    <property type="entry name" value="PPV_L1"/>
    <property type="match status" value="1"/>
</dbReference>
<dbReference type="InterPro" id="IPR002210">
    <property type="entry name" value="Capsid_L1_Papillomavir"/>
</dbReference>
<dbReference type="InterPro" id="IPR036973">
    <property type="entry name" value="Capsid_L1_sf_Papillomavir"/>
</dbReference>
<dbReference type="InterPro" id="IPR011222">
    <property type="entry name" value="dsDNA_vir_gr_I_capsid"/>
</dbReference>
<dbReference type="Pfam" id="PF00500">
    <property type="entry name" value="Late_protein_L1"/>
    <property type="match status" value="1"/>
</dbReference>
<dbReference type="PRINTS" id="PR00865">
    <property type="entry name" value="HPVCAPSIDL1"/>
</dbReference>
<dbReference type="SUPFAM" id="SSF88648">
    <property type="entry name" value="Group I dsDNA viruses"/>
    <property type="match status" value="1"/>
</dbReference>
<sequence>MTSLWLPATGKVYLPPSTPVARVQSTDEYIQRTDIYYHANSDRLLTVGHPYFDVRDTADNSKILVPKVSGNQYRAFRLLLPDPNRFALVDMNIYNPEKERLVWACRGLEIGRGQPLGVGTTGHPLFNKVKDTENANNYIVTSKDDRQDTSFDPKQVQMFIIGCTPCMGEYWDAAKPCDADAGQGKCPPLELINSVIQDGDMIDIGFGNINNKTLSVNRSDVSLDIVNDICKYPDFLKMANDIYGDACFFYARREQCYARHFFVRGGNVGDAIPNTAVGQDNNYILPAASQQAQNTLGSSIYFPTVSGSLVSTDAQLFNRPFWLQRAQGHNNGICWENQLFITVADNTRNTNFTISVSTDGQTPTEYDSTKVREFLRHVEEYEISIILQLCKVPLEPEVLAQINAMNSSILENWQLGFVPTPDNPIHDTYRYLTSQATRCPDKQPAPERKDPYEQYNFWTVDLTEKLSLDLDQYSLGRKFLFQAGLQRASRVSKSSAARASTRGIKRKRR</sequence>
<gene>
    <name evidence="1" type="primary">L1</name>
</gene>
<evidence type="ECO:0000255" key="1">
    <source>
        <dbReference type="HAMAP-Rule" id="MF_04002"/>
    </source>
</evidence>